<name>YL783_MIMIV</name>
<comment type="similarity">
    <text evidence="2">Belongs to the mimivirus BTB/WD family.</text>
</comment>
<reference key="1">
    <citation type="journal article" date="2004" name="Science">
        <title>The 1.2-megabase genome sequence of Mimivirus.</title>
        <authorList>
            <person name="Raoult D."/>
            <person name="Audic S."/>
            <person name="Robert C."/>
            <person name="Abergel C."/>
            <person name="Renesto P."/>
            <person name="Ogata H."/>
            <person name="La Scola B."/>
            <person name="Susan M."/>
            <person name="Claverie J.-M."/>
        </authorList>
    </citation>
    <scope>NUCLEOTIDE SEQUENCE [LARGE SCALE GENOMIC DNA]</scope>
    <source>
        <strain>Rowbotham-Bradford</strain>
    </source>
</reference>
<organismHost>
    <name type="scientific">Acanthamoeba polyphaga</name>
    <name type="common">Amoeba</name>
    <dbReference type="NCBI Taxonomy" id="5757"/>
</organismHost>
<feature type="chain" id="PRO_0000186244" description="Putative BTB/POZ domain and WD-repeat protein R783">
    <location>
        <begin position="1"/>
        <end position="527"/>
    </location>
</feature>
<feature type="domain" description="BTB" evidence="1">
    <location>
        <begin position="45"/>
        <end position="115"/>
    </location>
</feature>
<feature type="repeat" description="WD 1">
    <location>
        <begin position="215"/>
        <end position="266"/>
    </location>
</feature>
<feature type="repeat" description="WD 2">
    <location>
        <begin position="272"/>
        <end position="310"/>
    </location>
</feature>
<feature type="repeat" description="WD 3">
    <location>
        <begin position="313"/>
        <end position="353"/>
    </location>
</feature>
<feature type="repeat" description="WD 4">
    <location>
        <begin position="355"/>
        <end position="391"/>
    </location>
</feature>
<feature type="repeat" description="WD 5">
    <location>
        <begin position="436"/>
        <end position="476"/>
    </location>
</feature>
<dbReference type="EMBL" id="AY653733">
    <property type="protein sequence ID" value="AAV51043.1"/>
    <property type="molecule type" value="Genomic_DNA"/>
</dbReference>
<dbReference type="SMR" id="Q5UPS2"/>
<dbReference type="Proteomes" id="UP000001134">
    <property type="component" value="Genome"/>
</dbReference>
<dbReference type="CDD" id="cd18186">
    <property type="entry name" value="BTB_POZ_ZBTB_KLHL-like"/>
    <property type="match status" value="1"/>
</dbReference>
<dbReference type="Gene3D" id="3.30.710.10">
    <property type="entry name" value="Potassium Channel Kv1.1, Chain A"/>
    <property type="match status" value="1"/>
</dbReference>
<dbReference type="Gene3D" id="2.130.10.10">
    <property type="entry name" value="YVTN repeat-like/Quinoprotein amine dehydrogenase"/>
    <property type="match status" value="1"/>
</dbReference>
<dbReference type="InterPro" id="IPR000210">
    <property type="entry name" value="BTB/POZ_dom"/>
</dbReference>
<dbReference type="InterPro" id="IPR011333">
    <property type="entry name" value="SKP1/BTB/POZ_sf"/>
</dbReference>
<dbReference type="InterPro" id="IPR015943">
    <property type="entry name" value="WD40/YVTN_repeat-like_dom_sf"/>
</dbReference>
<dbReference type="InterPro" id="IPR036322">
    <property type="entry name" value="WD40_repeat_dom_sf"/>
</dbReference>
<dbReference type="InterPro" id="IPR001680">
    <property type="entry name" value="WD40_rpt"/>
</dbReference>
<dbReference type="InterPro" id="IPR050349">
    <property type="entry name" value="WD_LIS1/nudF_dynein_reg"/>
</dbReference>
<dbReference type="PANTHER" id="PTHR44129">
    <property type="entry name" value="WD REPEAT-CONTAINING PROTEIN POP1"/>
    <property type="match status" value="1"/>
</dbReference>
<dbReference type="Pfam" id="PF00651">
    <property type="entry name" value="BTB"/>
    <property type="match status" value="1"/>
</dbReference>
<dbReference type="SMART" id="SM00320">
    <property type="entry name" value="WD40"/>
    <property type="match status" value="4"/>
</dbReference>
<dbReference type="SUPFAM" id="SSF54695">
    <property type="entry name" value="POZ domain"/>
    <property type="match status" value="1"/>
</dbReference>
<dbReference type="SUPFAM" id="SSF50978">
    <property type="entry name" value="WD40 repeat-like"/>
    <property type="match status" value="1"/>
</dbReference>
<dbReference type="PROSITE" id="PS50097">
    <property type="entry name" value="BTB"/>
    <property type="match status" value="1"/>
</dbReference>
<dbReference type="PROSITE" id="PS50082">
    <property type="entry name" value="WD_REPEATS_2"/>
    <property type="match status" value="1"/>
</dbReference>
<dbReference type="PROSITE" id="PS50294">
    <property type="entry name" value="WD_REPEATS_REGION"/>
    <property type="match status" value="1"/>
</dbReference>
<evidence type="ECO:0000255" key="1">
    <source>
        <dbReference type="PROSITE-ProRule" id="PRU00037"/>
    </source>
</evidence>
<evidence type="ECO:0000305" key="2"/>
<organism>
    <name type="scientific">Acanthamoeba polyphaga mimivirus</name>
    <name type="common">APMV</name>
    <dbReference type="NCBI Taxonomy" id="212035"/>
    <lineage>
        <taxon>Viruses</taxon>
        <taxon>Varidnaviria</taxon>
        <taxon>Bamfordvirae</taxon>
        <taxon>Nucleocytoviricota</taxon>
        <taxon>Megaviricetes</taxon>
        <taxon>Imitervirales</taxon>
        <taxon>Mimiviridae</taxon>
        <taxon>Megamimivirinae</taxon>
        <taxon>Mimivirus</taxon>
        <taxon>Mimivirus bradfordmassiliense</taxon>
    </lineage>
</organism>
<sequence>MNQLSLKLSMSIIKIIIMATKKIQLDNFIESQNKLYSFTKEKLFTDVTIVLDDGNCQTTLDLHKAVLASKCTYFYNLFTKFSESKQSVIKINVANSYVTANIIASFYSQNTDTRNYPHWKYYLLEIMCLDFLGLEYDLEYFSKIQVPVEGFELLLDVVDIIGYTSDTIPIIARNLPHDYDFTKFPMELIEQLIKYVYSFDIILVNSNGIIDFFNIHGDKIKSISTFFTNNDIKYYTSHKINDELIVVFADNIVNVWNIKNSVVEASLEYPVNVKTRFEHFCYLPSNNHLISTSSYNIYVWDLSTNKLIKTVKKHKNTITGIHVSPVNDSQFVTIGRDDRICIWNAKTYNIVRCMISPVDCICYSSSGRELVIVNKHYIKVFNVSDGTFLFKMKINLNKSPNNIINSSYGKYIINYDAYIKIFYYPPNHLNDCTDIYCPSNYTQGIYTPDKKYLIMNRSDEDYYDVYDNSVAKDNKYVCNSFRIGKHVSRVFMFKDSSIGLFIVKNSLTSLYENLTSLMQLQTQEYFP</sequence>
<gene>
    <name type="ordered locus">MIMI_L783</name>
</gene>
<proteinExistence type="inferred from homology"/>
<keyword id="KW-1185">Reference proteome</keyword>
<keyword id="KW-0677">Repeat</keyword>
<keyword id="KW-0853">WD repeat</keyword>
<protein>
    <recommendedName>
        <fullName>Putative BTB/POZ domain and WD-repeat protein R783</fullName>
    </recommendedName>
</protein>
<accession>Q5UPS2</accession>